<sequence>MASQSQVLVEEKSSVRILTLNRPKQLNALCFNMISRLLQLFRAYEEDPSVKLVILKGQGRAFCAGGDVPPVVQNMVQGKWRLGADFFRDQYTLNYVMATYSKPQVSILNGIVMGAGAGVSIHGRFRIATENTVFAMPETSLGLFPDVGASYFLSRLPGFFGEYVGLTGARLDGAELLACGLATHFVPSTRLTALETDLCKVGSSDPSFVSTILDAYTQHPHLKQKSAYHRLDVIDRCFSKRTMEEIISALERETTQELDDWSLTTIRALKKSSPSSLKISLRSIREGRLQGVGHCLTREYRMVCHVMKGDLSKDLVEGCRAILIDKDRNPKWEPRRLEDMKDSMVDQFFERVEEEERWEDLKLSPRNNLHALRIAAKL</sequence>
<gene>
    <name type="ordered locus">At2g30660</name>
    <name type="ORF">T11J7.5</name>
</gene>
<dbReference type="EC" id="3.1.2.4"/>
<dbReference type="EMBL" id="AC002340">
    <property type="protein sequence ID" value="AAC02737.1"/>
    <property type="status" value="ALT_SEQ"/>
    <property type="molecule type" value="Genomic_DNA"/>
</dbReference>
<dbReference type="EMBL" id="CP002685">
    <property type="protein sequence ID" value="AEC08424.1"/>
    <property type="molecule type" value="Genomic_DNA"/>
</dbReference>
<dbReference type="EMBL" id="BT011751">
    <property type="protein sequence ID" value="AAS49114.1"/>
    <property type="molecule type" value="mRNA"/>
</dbReference>
<dbReference type="EMBL" id="AK229794">
    <property type="protein sequence ID" value="BAF01625.1"/>
    <property type="molecule type" value="mRNA"/>
</dbReference>
<dbReference type="PIR" id="B84711">
    <property type="entry name" value="B84711"/>
</dbReference>
<dbReference type="RefSeq" id="NP_180624.2">
    <property type="nucleotide sequence ID" value="NM_128618.4"/>
</dbReference>
<dbReference type="SMR" id="Q6NMB0"/>
<dbReference type="FunCoup" id="Q6NMB0">
    <property type="interactions" value="2537"/>
</dbReference>
<dbReference type="STRING" id="3702.Q6NMB0"/>
<dbReference type="PaxDb" id="3702-AT2G30660.1"/>
<dbReference type="ProteomicsDB" id="230322"/>
<dbReference type="EnsemblPlants" id="AT2G30660.1">
    <property type="protein sequence ID" value="AT2G30660.1"/>
    <property type="gene ID" value="AT2G30660"/>
</dbReference>
<dbReference type="GeneID" id="817616"/>
<dbReference type="Gramene" id="AT2G30660.1">
    <property type="protein sequence ID" value="AT2G30660.1"/>
    <property type="gene ID" value="AT2G30660"/>
</dbReference>
<dbReference type="KEGG" id="ath:AT2G30660"/>
<dbReference type="Araport" id="AT2G30660"/>
<dbReference type="TAIR" id="AT2G30660"/>
<dbReference type="eggNOG" id="ENOG502RY3N">
    <property type="taxonomic scope" value="Eukaryota"/>
</dbReference>
<dbReference type="HOGENOM" id="CLU_009834_22_1_1"/>
<dbReference type="InParanoid" id="Q6NMB0"/>
<dbReference type="OMA" id="ACLTREY"/>
<dbReference type="PhylomeDB" id="Q6NMB0"/>
<dbReference type="BioCyc" id="ARA:AT2G30660-MONOMER"/>
<dbReference type="UniPathway" id="UPA00362"/>
<dbReference type="PRO" id="PR:Q6NMB0"/>
<dbReference type="Proteomes" id="UP000006548">
    <property type="component" value="Chromosome 2"/>
</dbReference>
<dbReference type="ExpressionAtlas" id="Q6NMB0">
    <property type="expression patterns" value="baseline and differential"/>
</dbReference>
<dbReference type="GO" id="GO:0005777">
    <property type="term" value="C:peroxisome"/>
    <property type="evidence" value="ECO:0007669"/>
    <property type="project" value="UniProtKB-SubCell"/>
</dbReference>
<dbReference type="GO" id="GO:0003860">
    <property type="term" value="F:3-hydroxyisobutyryl-CoA hydrolase activity"/>
    <property type="evidence" value="ECO:0007669"/>
    <property type="project" value="UniProtKB-EC"/>
</dbReference>
<dbReference type="GO" id="GO:0006574">
    <property type="term" value="P:valine catabolic process"/>
    <property type="evidence" value="ECO:0007669"/>
    <property type="project" value="UniProtKB-UniPathway"/>
</dbReference>
<dbReference type="CDD" id="cd06558">
    <property type="entry name" value="crotonase-like"/>
    <property type="match status" value="1"/>
</dbReference>
<dbReference type="FunFam" id="3.90.226.10:FF:000027">
    <property type="entry name" value="Probable 3-hydroxyisobutyryl-CoA hydrolase 2"/>
    <property type="match status" value="1"/>
</dbReference>
<dbReference type="Gene3D" id="3.90.226.10">
    <property type="entry name" value="2-enoyl-CoA Hydratase, Chain A, domain 1"/>
    <property type="match status" value="1"/>
</dbReference>
<dbReference type="InterPro" id="IPR029045">
    <property type="entry name" value="ClpP/crotonase-like_dom_sf"/>
</dbReference>
<dbReference type="InterPro" id="IPR045004">
    <property type="entry name" value="ECH_dom"/>
</dbReference>
<dbReference type="InterPro" id="IPR032259">
    <property type="entry name" value="HIBYL-CoA-H"/>
</dbReference>
<dbReference type="NCBIfam" id="NF004127">
    <property type="entry name" value="PRK05617.1"/>
    <property type="match status" value="1"/>
</dbReference>
<dbReference type="PANTHER" id="PTHR43176:SF3">
    <property type="entry name" value="3-HYDROXYISOBUTYRYL-COA HYDROLASE, MITOCHONDRIAL"/>
    <property type="match status" value="1"/>
</dbReference>
<dbReference type="PANTHER" id="PTHR43176">
    <property type="entry name" value="3-HYDROXYISOBUTYRYL-COA HYDROLASE-RELATED"/>
    <property type="match status" value="1"/>
</dbReference>
<dbReference type="Pfam" id="PF16113">
    <property type="entry name" value="ECH_2"/>
    <property type="match status" value="1"/>
</dbReference>
<dbReference type="SUPFAM" id="SSF52096">
    <property type="entry name" value="ClpP/crotonase"/>
    <property type="match status" value="1"/>
</dbReference>
<keyword id="KW-0101">Branched-chain amino acid catabolism</keyword>
<keyword id="KW-0378">Hydrolase</keyword>
<keyword id="KW-0576">Peroxisome</keyword>
<keyword id="KW-1185">Reference proteome</keyword>
<evidence type="ECO:0000250" key="1"/>
<evidence type="ECO:0000305" key="2"/>
<feature type="chain" id="PRO_0000392979" description="Probable 3-hydroxyisobutyryl-CoA hydrolase 3">
    <location>
        <begin position="1"/>
        <end position="378"/>
    </location>
</feature>
<feature type="binding site" evidence="1">
    <location>
        <position position="138"/>
    </location>
    <ligand>
        <name>substrate</name>
    </ligand>
</feature>
<feature type="binding site" evidence="1">
    <location>
        <position position="146"/>
    </location>
    <ligand>
        <name>substrate</name>
    </ligand>
</feature>
<comment type="function">
    <text evidence="1">Involved in valine catabolism.</text>
</comment>
<comment type="catalytic activity">
    <reaction>
        <text>3-hydroxy-2-methylpropanoyl-CoA + H2O = 3-hydroxy-2-methylpropanoate + CoA + H(+)</text>
        <dbReference type="Rhea" id="RHEA:20888"/>
        <dbReference type="ChEBI" id="CHEBI:11805"/>
        <dbReference type="ChEBI" id="CHEBI:15377"/>
        <dbReference type="ChEBI" id="CHEBI:15378"/>
        <dbReference type="ChEBI" id="CHEBI:57287"/>
        <dbReference type="ChEBI" id="CHEBI:57340"/>
        <dbReference type="EC" id="3.1.2.4"/>
    </reaction>
</comment>
<comment type="pathway">
    <text>Amino-acid degradation; L-valine degradation.</text>
</comment>
<comment type="subcellular location">
    <subcellularLocation>
        <location evidence="2">Peroxisome</location>
    </subcellularLocation>
</comment>
<comment type="similarity">
    <text evidence="2">Belongs to the enoyl-CoA hydratase/isomerase family.</text>
</comment>
<comment type="sequence caution" evidence="2">
    <conflict type="erroneous gene model prediction">
        <sequence resource="EMBL-CDS" id="AAC02737"/>
    </conflict>
</comment>
<name>HIBC3_ARATH</name>
<reference key="1">
    <citation type="journal article" date="1999" name="Nature">
        <title>Sequence and analysis of chromosome 2 of the plant Arabidopsis thaliana.</title>
        <authorList>
            <person name="Lin X."/>
            <person name="Kaul S."/>
            <person name="Rounsley S.D."/>
            <person name="Shea T.P."/>
            <person name="Benito M.-I."/>
            <person name="Town C.D."/>
            <person name="Fujii C.Y."/>
            <person name="Mason T.M."/>
            <person name="Bowman C.L."/>
            <person name="Barnstead M.E."/>
            <person name="Feldblyum T.V."/>
            <person name="Buell C.R."/>
            <person name="Ketchum K.A."/>
            <person name="Lee J.J."/>
            <person name="Ronning C.M."/>
            <person name="Koo H.L."/>
            <person name="Moffat K.S."/>
            <person name="Cronin L.A."/>
            <person name="Shen M."/>
            <person name="Pai G."/>
            <person name="Van Aken S."/>
            <person name="Umayam L."/>
            <person name="Tallon L.J."/>
            <person name="Gill J.E."/>
            <person name="Adams M.D."/>
            <person name="Carrera A.J."/>
            <person name="Creasy T.H."/>
            <person name="Goodman H.M."/>
            <person name="Somerville C.R."/>
            <person name="Copenhaver G.P."/>
            <person name="Preuss D."/>
            <person name="Nierman W.C."/>
            <person name="White O."/>
            <person name="Eisen J.A."/>
            <person name="Salzberg S.L."/>
            <person name="Fraser C.M."/>
            <person name="Venter J.C."/>
        </authorList>
    </citation>
    <scope>NUCLEOTIDE SEQUENCE [LARGE SCALE GENOMIC DNA]</scope>
    <source>
        <strain>cv. Columbia</strain>
    </source>
</reference>
<reference key="2">
    <citation type="journal article" date="2017" name="Plant J.">
        <title>Araport11: a complete reannotation of the Arabidopsis thaliana reference genome.</title>
        <authorList>
            <person name="Cheng C.Y."/>
            <person name="Krishnakumar V."/>
            <person name="Chan A.P."/>
            <person name="Thibaud-Nissen F."/>
            <person name="Schobel S."/>
            <person name="Town C.D."/>
        </authorList>
    </citation>
    <scope>GENOME REANNOTATION</scope>
    <source>
        <strain>cv. Columbia</strain>
    </source>
</reference>
<reference key="3">
    <citation type="submission" date="2004-03" db="EMBL/GenBank/DDBJ databases">
        <title>Arabidopsis ORF clones.</title>
        <authorList>
            <person name="Cheuk R."/>
            <person name="Chen H."/>
            <person name="Kim C.J."/>
            <person name="Shinn P."/>
            <person name="Carninci P."/>
            <person name="Hayashizaki Y."/>
            <person name="Ishida J."/>
            <person name="Kamiya A."/>
            <person name="Kawai J."/>
            <person name="Narusaka M."/>
            <person name="Sakurai T."/>
            <person name="Satou M."/>
            <person name="Seki M."/>
            <person name="Shinozaki K."/>
            <person name="Ecker J.R."/>
        </authorList>
    </citation>
    <scope>NUCLEOTIDE SEQUENCE [LARGE SCALE MRNA]</scope>
    <source>
        <strain>cv. Columbia</strain>
    </source>
</reference>
<reference key="4">
    <citation type="submission" date="2006-07" db="EMBL/GenBank/DDBJ databases">
        <title>Large-scale analysis of RIKEN Arabidopsis full-length (RAFL) cDNAs.</title>
        <authorList>
            <person name="Totoki Y."/>
            <person name="Seki M."/>
            <person name="Ishida J."/>
            <person name="Nakajima M."/>
            <person name="Enju A."/>
            <person name="Kamiya A."/>
            <person name="Narusaka M."/>
            <person name="Shin-i T."/>
            <person name="Nakagawa M."/>
            <person name="Sakamoto N."/>
            <person name="Oishi K."/>
            <person name="Kohara Y."/>
            <person name="Kobayashi M."/>
            <person name="Toyoda A."/>
            <person name="Sakaki Y."/>
            <person name="Sakurai T."/>
            <person name="Iida K."/>
            <person name="Akiyama K."/>
            <person name="Satou M."/>
            <person name="Toyoda T."/>
            <person name="Konagaya A."/>
            <person name="Carninci P."/>
            <person name="Kawai J."/>
            <person name="Hayashizaki Y."/>
            <person name="Shinozaki K."/>
        </authorList>
    </citation>
    <scope>NUCLEOTIDE SEQUENCE [LARGE SCALE MRNA]</scope>
    <source>
        <strain>cv. Columbia</strain>
    </source>
</reference>
<reference key="5">
    <citation type="journal article" date="2001" name="J. Biol. Chem.">
        <title>chy1, an Arabidopsis mutant with impaired beta-oxidation, is defective in a peroxisomal beta-hydroxyisobutyryl-CoA hydrolase.</title>
        <authorList>
            <person name="Zolman B.K."/>
            <person name="Monroe-Augustus M."/>
            <person name="Thompson B."/>
            <person name="Hawes J.W."/>
            <person name="Krukenberg K.A."/>
            <person name="Matsuda S.P."/>
            <person name="Bartel B."/>
        </authorList>
    </citation>
    <scope>GENE FAMILY</scope>
</reference>
<accession>Q6NMB0</accession>
<accession>O49331</accession>
<protein>
    <recommendedName>
        <fullName>Probable 3-hydroxyisobutyryl-CoA hydrolase 3</fullName>
        <ecNumber>3.1.2.4</ecNumber>
    </recommendedName>
</protein>
<proteinExistence type="evidence at transcript level"/>
<organism>
    <name type="scientific">Arabidopsis thaliana</name>
    <name type="common">Mouse-ear cress</name>
    <dbReference type="NCBI Taxonomy" id="3702"/>
    <lineage>
        <taxon>Eukaryota</taxon>
        <taxon>Viridiplantae</taxon>
        <taxon>Streptophyta</taxon>
        <taxon>Embryophyta</taxon>
        <taxon>Tracheophyta</taxon>
        <taxon>Spermatophyta</taxon>
        <taxon>Magnoliopsida</taxon>
        <taxon>eudicotyledons</taxon>
        <taxon>Gunneridae</taxon>
        <taxon>Pentapetalae</taxon>
        <taxon>rosids</taxon>
        <taxon>malvids</taxon>
        <taxon>Brassicales</taxon>
        <taxon>Brassicaceae</taxon>
        <taxon>Camelineae</taxon>
        <taxon>Arabidopsis</taxon>
    </lineage>
</organism>